<sequence length="225" mass="25604">MRIDIITVLPEMIENTLNCSIIGRAQERGLLELKLHQLRDYSTDKWKRVDDYPFGGEPGMVMQVEPIDRIITELKTQREYDEVIFTSPDGERFDQPMANELSLLSNLIILCGHYKGIDYRIREHLITREISIGDYVLTGGELAAAVMTDAIARLIPGVLNDAGSALSDTFQDNLLAPPVYTRPAEYKGWRVPDILLSGHEANIAKWRLEQAVERTKRLRPDLIKD</sequence>
<feature type="chain" id="PRO_1000130195" description="tRNA (guanine-N(1)-)-methyltransferase">
    <location>
        <begin position="1"/>
        <end position="225"/>
    </location>
</feature>
<feature type="binding site" evidence="1">
    <location>
        <position position="112"/>
    </location>
    <ligand>
        <name>S-adenosyl-L-methionine</name>
        <dbReference type="ChEBI" id="CHEBI:59789"/>
    </ligand>
</feature>
<feature type="binding site" evidence="1">
    <location>
        <begin position="132"/>
        <end position="137"/>
    </location>
    <ligand>
        <name>S-adenosyl-L-methionine</name>
        <dbReference type="ChEBI" id="CHEBI:59789"/>
    </ligand>
</feature>
<organism>
    <name type="scientific">Porphyromonas gingivalis (strain ATCC 33277 / DSM 20709 / CIP 103683 / JCM 12257 / NCTC 11834 / 2561)</name>
    <dbReference type="NCBI Taxonomy" id="431947"/>
    <lineage>
        <taxon>Bacteria</taxon>
        <taxon>Pseudomonadati</taxon>
        <taxon>Bacteroidota</taxon>
        <taxon>Bacteroidia</taxon>
        <taxon>Bacteroidales</taxon>
        <taxon>Porphyromonadaceae</taxon>
        <taxon>Porphyromonas</taxon>
    </lineage>
</organism>
<accession>B2RMA5</accession>
<gene>
    <name evidence="1" type="primary">trmD</name>
    <name type="ordered locus">PGN_1982</name>
</gene>
<protein>
    <recommendedName>
        <fullName evidence="1">tRNA (guanine-N(1)-)-methyltransferase</fullName>
        <ecNumber evidence="1">2.1.1.228</ecNumber>
    </recommendedName>
    <alternativeName>
        <fullName evidence="1">M1G-methyltransferase</fullName>
    </alternativeName>
    <alternativeName>
        <fullName evidence="1">tRNA [GM37] methyltransferase</fullName>
    </alternativeName>
</protein>
<comment type="function">
    <text evidence="1">Specifically methylates guanosine-37 in various tRNAs.</text>
</comment>
<comment type="catalytic activity">
    <reaction evidence="1">
        <text>guanosine(37) in tRNA + S-adenosyl-L-methionine = N(1)-methylguanosine(37) in tRNA + S-adenosyl-L-homocysteine + H(+)</text>
        <dbReference type="Rhea" id="RHEA:36899"/>
        <dbReference type="Rhea" id="RHEA-COMP:10145"/>
        <dbReference type="Rhea" id="RHEA-COMP:10147"/>
        <dbReference type="ChEBI" id="CHEBI:15378"/>
        <dbReference type="ChEBI" id="CHEBI:57856"/>
        <dbReference type="ChEBI" id="CHEBI:59789"/>
        <dbReference type="ChEBI" id="CHEBI:73542"/>
        <dbReference type="ChEBI" id="CHEBI:74269"/>
        <dbReference type="EC" id="2.1.1.228"/>
    </reaction>
</comment>
<comment type="subunit">
    <text evidence="1">Homodimer.</text>
</comment>
<comment type="subcellular location">
    <subcellularLocation>
        <location evidence="1">Cytoplasm</location>
    </subcellularLocation>
</comment>
<comment type="similarity">
    <text evidence="1">Belongs to the RNA methyltransferase TrmD family.</text>
</comment>
<reference key="1">
    <citation type="journal article" date="2008" name="DNA Res.">
        <title>Determination of the genome sequence of Porphyromonas gingivalis strain ATCC 33277 and genomic comparison with strain W83 revealed extensive genome rearrangements in P. gingivalis.</title>
        <authorList>
            <person name="Naito M."/>
            <person name="Hirakawa H."/>
            <person name="Yamashita A."/>
            <person name="Ohara N."/>
            <person name="Shoji M."/>
            <person name="Yukitake H."/>
            <person name="Nakayama K."/>
            <person name="Toh H."/>
            <person name="Yoshimura F."/>
            <person name="Kuhara S."/>
            <person name="Hattori M."/>
            <person name="Hayashi T."/>
            <person name="Nakayama K."/>
        </authorList>
    </citation>
    <scope>NUCLEOTIDE SEQUENCE [LARGE SCALE GENOMIC DNA]</scope>
    <source>
        <strain>ATCC 33277 / DSM 20709 / CIP 103683 / JCM 12257 / NCTC 11834 / 2561</strain>
    </source>
</reference>
<name>TRMD_PORG3</name>
<dbReference type="EC" id="2.1.1.228" evidence="1"/>
<dbReference type="EMBL" id="AP009380">
    <property type="protein sequence ID" value="BAG34500.1"/>
    <property type="molecule type" value="Genomic_DNA"/>
</dbReference>
<dbReference type="RefSeq" id="WP_012458661.1">
    <property type="nucleotide sequence ID" value="NC_010729.1"/>
</dbReference>
<dbReference type="SMR" id="B2RMA5"/>
<dbReference type="GeneID" id="29257119"/>
<dbReference type="KEGG" id="pgn:PGN_1982"/>
<dbReference type="eggNOG" id="COG0336">
    <property type="taxonomic scope" value="Bacteria"/>
</dbReference>
<dbReference type="HOGENOM" id="CLU_047363_0_1_10"/>
<dbReference type="OrthoDB" id="9807416at2"/>
<dbReference type="BioCyc" id="PGIN431947:G1G2V-2216-MONOMER"/>
<dbReference type="Proteomes" id="UP000008842">
    <property type="component" value="Chromosome"/>
</dbReference>
<dbReference type="GO" id="GO:0005829">
    <property type="term" value="C:cytosol"/>
    <property type="evidence" value="ECO:0007669"/>
    <property type="project" value="TreeGrafter"/>
</dbReference>
<dbReference type="GO" id="GO:0052906">
    <property type="term" value="F:tRNA (guanine(37)-N1)-methyltransferase activity"/>
    <property type="evidence" value="ECO:0007669"/>
    <property type="project" value="UniProtKB-UniRule"/>
</dbReference>
<dbReference type="GO" id="GO:0002939">
    <property type="term" value="P:tRNA N1-guanine methylation"/>
    <property type="evidence" value="ECO:0007669"/>
    <property type="project" value="TreeGrafter"/>
</dbReference>
<dbReference type="CDD" id="cd18080">
    <property type="entry name" value="TrmD-like"/>
    <property type="match status" value="1"/>
</dbReference>
<dbReference type="FunFam" id="3.40.1280.10:FF:000001">
    <property type="entry name" value="tRNA (guanine-N(1)-)-methyltransferase"/>
    <property type="match status" value="1"/>
</dbReference>
<dbReference type="Gene3D" id="3.40.1280.10">
    <property type="match status" value="1"/>
</dbReference>
<dbReference type="Gene3D" id="1.10.1270.20">
    <property type="entry name" value="tRNA(m1g37)methyltransferase, domain 2"/>
    <property type="match status" value="1"/>
</dbReference>
<dbReference type="HAMAP" id="MF_00605">
    <property type="entry name" value="TrmD"/>
    <property type="match status" value="1"/>
</dbReference>
<dbReference type="InterPro" id="IPR029028">
    <property type="entry name" value="Alpha/beta_knot_MTases"/>
</dbReference>
<dbReference type="InterPro" id="IPR023148">
    <property type="entry name" value="tRNA_m1G_MeTrfase_C_sf"/>
</dbReference>
<dbReference type="InterPro" id="IPR002649">
    <property type="entry name" value="tRNA_m1G_MeTrfase_TrmD"/>
</dbReference>
<dbReference type="InterPro" id="IPR029026">
    <property type="entry name" value="tRNA_m1G_MTases_N"/>
</dbReference>
<dbReference type="InterPro" id="IPR016009">
    <property type="entry name" value="tRNA_MeTrfase_TRMD/TRM10"/>
</dbReference>
<dbReference type="NCBIfam" id="NF000648">
    <property type="entry name" value="PRK00026.1"/>
    <property type="match status" value="1"/>
</dbReference>
<dbReference type="NCBIfam" id="TIGR00088">
    <property type="entry name" value="trmD"/>
    <property type="match status" value="1"/>
</dbReference>
<dbReference type="PANTHER" id="PTHR46417">
    <property type="entry name" value="TRNA (GUANINE-N(1)-)-METHYLTRANSFERASE"/>
    <property type="match status" value="1"/>
</dbReference>
<dbReference type="PANTHER" id="PTHR46417:SF1">
    <property type="entry name" value="TRNA (GUANINE-N(1)-)-METHYLTRANSFERASE"/>
    <property type="match status" value="1"/>
</dbReference>
<dbReference type="Pfam" id="PF01746">
    <property type="entry name" value="tRNA_m1G_MT"/>
    <property type="match status" value="1"/>
</dbReference>
<dbReference type="PIRSF" id="PIRSF000386">
    <property type="entry name" value="tRNA_mtase"/>
    <property type="match status" value="1"/>
</dbReference>
<dbReference type="SUPFAM" id="SSF75217">
    <property type="entry name" value="alpha/beta knot"/>
    <property type="match status" value="1"/>
</dbReference>
<keyword id="KW-0963">Cytoplasm</keyword>
<keyword id="KW-0489">Methyltransferase</keyword>
<keyword id="KW-0949">S-adenosyl-L-methionine</keyword>
<keyword id="KW-0808">Transferase</keyword>
<keyword id="KW-0819">tRNA processing</keyword>
<proteinExistence type="inferred from homology"/>
<evidence type="ECO:0000255" key="1">
    <source>
        <dbReference type="HAMAP-Rule" id="MF_00605"/>
    </source>
</evidence>